<sequence length="79" mass="8818">MKTLLLTLVVMTIVCLDLGYTLTCYMNPSGTMVCKEHETMCYRLIVWTFQYHVLYLKGCSSSCPGGNNCACCSTDLCNN</sequence>
<protein>
    <recommendedName>
        <fullName evidence="5">Toxin 3FTx-Oxy5</fullName>
    </recommendedName>
    <alternativeName>
        <fullName>Three-finger toxin</fullName>
        <shortName>3FTx</shortName>
    </alternativeName>
</protein>
<reference key="1">
    <citation type="journal article" date="2008" name="Mol. Cell. Proteomics">
        <title>Evolution of an arsenal: structural and functional diversification of the venom system in the advanced snakes (Caenophidia).</title>
        <authorList>
            <person name="Fry B.G."/>
            <person name="Scheib H."/>
            <person name="van der Weerd L."/>
            <person name="Young B."/>
            <person name="McNaughtan J."/>
            <person name="Ramjan S.F.R."/>
            <person name="Vidal N."/>
            <person name="Poelmann R.E."/>
            <person name="Norman J.A."/>
        </authorList>
    </citation>
    <scope>NUCLEOTIDE SEQUENCE [LARGE SCALE MRNA]</scope>
    <source>
        <tissue>Venom gland</tissue>
    </source>
</reference>
<proteinExistence type="inferred from homology"/>
<accession>A7X4S7</accession>
<dbReference type="EMBL" id="EU029753">
    <property type="protein sequence ID" value="ABU68553.1"/>
    <property type="molecule type" value="mRNA"/>
</dbReference>
<dbReference type="SMR" id="A7X4S7"/>
<dbReference type="GO" id="GO:0005576">
    <property type="term" value="C:extracellular region"/>
    <property type="evidence" value="ECO:0007669"/>
    <property type="project" value="UniProtKB-SubCell"/>
</dbReference>
<dbReference type="GO" id="GO:0090729">
    <property type="term" value="F:toxin activity"/>
    <property type="evidence" value="ECO:0007669"/>
    <property type="project" value="UniProtKB-KW"/>
</dbReference>
<dbReference type="CDD" id="cd00206">
    <property type="entry name" value="TFP_snake_toxin"/>
    <property type="match status" value="1"/>
</dbReference>
<dbReference type="Gene3D" id="2.10.60.10">
    <property type="entry name" value="CD59"/>
    <property type="match status" value="1"/>
</dbReference>
<dbReference type="InterPro" id="IPR003571">
    <property type="entry name" value="Snake_3FTx"/>
</dbReference>
<dbReference type="InterPro" id="IPR045860">
    <property type="entry name" value="Snake_toxin-like_sf"/>
</dbReference>
<dbReference type="SUPFAM" id="SSF57302">
    <property type="entry name" value="Snake toxin-like"/>
    <property type="match status" value="1"/>
</dbReference>
<keyword id="KW-1015">Disulfide bond</keyword>
<keyword id="KW-0964">Secreted</keyword>
<keyword id="KW-0732">Signal</keyword>
<keyword id="KW-0800">Toxin</keyword>
<organism>
    <name type="scientific">Oxyuranus microlepidotus</name>
    <name type="common">Inland taipan</name>
    <name type="synonym">Diemenia microlepidota</name>
    <dbReference type="NCBI Taxonomy" id="111177"/>
    <lineage>
        <taxon>Eukaryota</taxon>
        <taxon>Metazoa</taxon>
        <taxon>Chordata</taxon>
        <taxon>Craniata</taxon>
        <taxon>Vertebrata</taxon>
        <taxon>Euteleostomi</taxon>
        <taxon>Lepidosauria</taxon>
        <taxon>Squamata</taxon>
        <taxon>Bifurcata</taxon>
        <taxon>Unidentata</taxon>
        <taxon>Episquamata</taxon>
        <taxon>Toxicofera</taxon>
        <taxon>Serpentes</taxon>
        <taxon>Colubroidea</taxon>
        <taxon>Elapidae</taxon>
        <taxon>Hydrophiinae</taxon>
        <taxon>Oxyuranus</taxon>
    </lineage>
</organism>
<evidence type="ECO:0000250" key="1"/>
<evidence type="ECO:0000250" key="2">
    <source>
        <dbReference type="UniProtKB" id="P60301"/>
    </source>
</evidence>
<evidence type="ECO:0000255" key="3"/>
<evidence type="ECO:0000305" key="4"/>
<evidence type="ECO:0000312" key="5">
    <source>
        <dbReference type="EMBL" id="ABU68553.1"/>
    </source>
</evidence>
<feature type="signal peptide" evidence="3">
    <location>
        <begin position="1"/>
        <end position="23"/>
    </location>
</feature>
<feature type="chain" id="PRO_0000316176" description="Toxin 3FTx-Oxy5">
    <location>
        <begin position="24"/>
        <end position="79"/>
    </location>
</feature>
<feature type="disulfide bond" evidence="2">
    <location>
        <begin position="24"/>
        <end position="41"/>
    </location>
</feature>
<feature type="disulfide bond" evidence="2">
    <location>
        <begin position="34"/>
        <end position="59"/>
    </location>
</feature>
<feature type="disulfide bond" evidence="2">
    <location>
        <begin position="63"/>
        <end position="71"/>
    </location>
</feature>
<feature type="disulfide bond" evidence="2">
    <location>
        <begin position="72"/>
        <end position="77"/>
    </location>
</feature>
<name>3SX5_OXYMI</name>
<comment type="subcellular location">
    <subcellularLocation>
        <location evidence="1">Secreted</location>
    </subcellularLocation>
</comment>
<comment type="tissue specificity">
    <text evidence="4">Expressed by the venom gland.</text>
</comment>
<comment type="similarity">
    <text evidence="4">Belongs to the three-finger toxin family. Short-chain subfamily.</text>
</comment>